<keyword id="KW-0025">Alternative splicing</keyword>
<keyword id="KW-1015">Disulfide bond</keyword>
<keyword id="KW-0256">Endoplasmic reticulum</keyword>
<keyword id="KW-0325">Glycoprotein</keyword>
<keyword id="KW-0333">Golgi apparatus</keyword>
<keyword id="KW-0430">Lectin</keyword>
<keyword id="KW-0472">Membrane</keyword>
<keyword id="KW-0479">Metal-binding</keyword>
<keyword id="KW-1185">Reference proteome</keyword>
<keyword id="KW-0732">Signal</keyword>
<keyword id="KW-0812">Transmembrane</keyword>
<keyword id="KW-1133">Transmembrane helix</keyword>
<gene>
    <name type="primary">LMAN2L</name>
    <name type="synonym">VIPL</name>
</gene>
<accession>Q2HJD1</accession>
<accession>Q5BIS5</accession>
<feature type="signal peptide" evidence="3">
    <location>
        <begin position="1"/>
        <end position="38"/>
    </location>
</feature>
<feature type="chain" id="PRO_0000232651" description="VIP36-like protein">
    <location>
        <begin position="39"/>
        <end position="348"/>
    </location>
</feature>
<feature type="topological domain" description="Lumenal" evidence="3">
    <location>
        <begin position="39"/>
        <end position="313"/>
    </location>
</feature>
<feature type="transmembrane region" description="Helical" evidence="3">
    <location>
        <begin position="314"/>
        <end position="334"/>
    </location>
</feature>
<feature type="topological domain" description="Cytoplasmic" evidence="3">
    <location>
        <begin position="335"/>
        <end position="348"/>
    </location>
</feature>
<feature type="domain" description="L-type lectin-like" evidence="4">
    <location>
        <begin position="49"/>
        <end position="274"/>
    </location>
</feature>
<feature type="short sequence motif" description="Endoplasmic reticulum retention signal" evidence="1">
    <location>
        <begin position="344"/>
        <end position="346"/>
    </location>
</feature>
<feature type="binding site" evidence="4">
    <location>
        <position position="93"/>
    </location>
    <ligand>
        <name>a carbohydrate</name>
        <dbReference type="ChEBI" id="CHEBI:16646"/>
    </ligand>
</feature>
<feature type="binding site" evidence="4">
    <location>
        <position position="128"/>
    </location>
    <ligand>
        <name>a carbohydrate</name>
        <dbReference type="ChEBI" id="CHEBI:16646"/>
    </ligand>
</feature>
<feature type="binding site" evidence="4">
    <location>
        <position position="159"/>
    </location>
    <ligand>
        <name>Ca(2+)</name>
        <dbReference type="ChEBI" id="CHEBI:29108"/>
    </ligand>
</feature>
<feature type="binding site" evidence="4">
    <location>
        <position position="161"/>
    </location>
    <ligand>
        <name>a carbohydrate</name>
        <dbReference type="ChEBI" id="CHEBI:16646"/>
    </ligand>
</feature>
<feature type="binding site" evidence="4">
    <location>
        <position position="161"/>
    </location>
    <ligand>
        <name>Ca(2+)</name>
        <dbReference type="ChEBI" id="CHEBI:29108"/>
    </ligand>
</feature>
<feature type="binding site" evidence="4">
    <location>
        <position position="163"/>
    </location>
    <ligand>
        <name>a carbohydrate</name>
        <dbReference type="ChEBI" id="CHEBI:16646"/>
    </ligand>
</feature>
<feature type="binding site" evidence="4">
    <location>
        <position position="163"/>
    </location>
    <ligand>
        <name>Ca(2+)</name>
        <dbReference type="ChEBI" id="CHEBI:29108"/>
    </ligand>
</feature>
<feature type="binding site" evidence="4">
    <location>
        <position position="188"/>
    </location>
    <ligand>
        <name>a carbohydrate</name>
        <dbReference type="ChEBI" id="CHEBI:16646"/>
    </ligand>
</feature>
<feature type="binding site" evidence="4">
    <location>
        <position position="191"/>
    </location>
    <ligand>
        <name>Ca(2+)</name>
        <dbReference type="ChEBI" id="CHEBI:29108"/>
    </ligand>
</feature>
<feature type="binding site" evidence="4">
    <location>
        <begin position="258"/>
        <end position="260"/>
    </location>
    <ligand>
        <name>a carbohydrate</name>
        <dbReference type="ChEBI" id="CHEBI:16646"/>
    </ligand>
</feature>
<feature type="glycosylation site" description="N-linked (GlcNAc...) asparagine" evidence="3">
    <location>
        <position position="181"/>
    </location>
</feature>
<feature type="disulfide bond" evidence="4">
    <location>
        <begin position="200"/>
        <end position="237"/>
    </location>
</feature>
<feature type="splice variant" id="VSP_017941" description="In isoform 2." evidence="5">
    <original>E</original>
    <variation>EAQKRRYSPGVQ</variation>
    <location>
        <position position="169"/>
    </location>
</feature>
<proteinExistence type="evidence at transcript level"/>
<name>LMA2L_BOVIN</name>
<comment type="function">
    <text evidence="2">May be involved in the regulation of export from the endoplasmic reticulum of a subset of glycoproteins. May function as a regulator of ERGIC-53 (By similarity).</text>
</comment>
<comment type="subcellular location">
    <subcellularLocation>
        <location>Endoplasmic reticulum membrane</location>
        <topology>Single-pass type I membrane protein</topology>
    </subcellularLocation>
    <subcellularLocation>
        <location>Golgi apparatus membrane</location>
        <topology>Single-pass type I membrane protein</topology>
    </subcellularLocation>
    <text>Predominantly found in the endoplasmic reticulum. Partly found in the Golgi.</text>
</comment>
<comment type="alternative products">
    <event type="alternative splicing"/>
    <isoform>
        <id>Q2HJD1-1</id>
        <name>1</name>
        <sequence type="displayed"/>
    </isoform>
    <isoform>
        <id>Q2HJD1-2</id>
        <name>2</name>
        <sequence type="described" ref="VSP_017941"/>
    </isoform>
</comment>
<organism>
    <name type="scientific">Bos taurus</name>
    <name type="common">Bovine</name>
    <dbReference type="NCBI Taxonomy" id="9913"/>
    <lineage>
        <taxon>Eukaryota</taxon>
        <taxon>Metazoa</taxon>
        <taxon>Chordata</taxon>
        <taxon>Craniata</taxon>
        <taxon>Vertebrata</taxon>
        <taxon>Euteleostomi</taxon>
        <taxon>Mammalia</taxon>
        <taxon>Eutheria</taxon>
        <taxon>Laurasiatheria</taxon>
        <taxon>Artiodactyla</taxon>
        <taxon>Ruminantia</taxon>
        <taxon>Pecora</taxon>
        <taxon>Bovidae</taxon>
        <taxon>Bovinae</taxon>
        <taxon>Bos</taxon>
    </lineage>
</organism>
<protein>
    <recommendedName>
        <fullName>VIP36-like protein</fullName>
    </recommendedName>
    <alternativeName>
        <fullName>Lectin mannose-binding 2-like</fullName>
        <shortName>LMAN2-like protein</shortName>
    </alternativeName>
</protein>
<reference key="1">
    <citation type="journal article" date="2005" name="BMC Genomics">
        <title>Characterization of 954 bovine full-CDS cDNA sequences.</title>
        <authorList>
            <person name="Harhay G.P."/>
            <person name="Sonstegard T.S."/>
            <person name="Keele J.W."/>
            <person name="Heaton M.P."/>
            <person name="Clawson M.L."/>
            <person name="Snelling W.M."/>
            <person name="Wiedmann R.T."/>
            <person name="Van Tassell C.P."/>
            <person name="Smith T.P.L."/>
        </authorList>
    </citation>
    <scope>NUCLEOTIDE SEQUENCE [LARGE SCALE MRNA] (ISOFORM 2)</scope>
</reference>
<reference key="2">
    <citation type="submission" date="2005-09" db="EMBL/GenBank/DDBJ databases">
        <authorList>
            <consortium name="NIH - Mammalian Gene Collection (MGC) project"/>
        </authorList>
    </citation>
    <scope>NUCLEOTIDE SEQUENCE [LARGE SCALE MRNA] (ISOFORM 1)</scope>
    <source>
        <strain>Hereford</strain>
        <tissue>Fetal colon</tissue>
    </source>
</reference>
<evidence type="ECO:0000250" key="1"/>
<evidence type="ECO:0000250" key="2">
    <source>
        <dbReference type="UniProtKB" id="Q9H0V9"/>
    </source>
</evidence>
<evidence type="ECO:0000255" key="3"/>
<evidence type="ECO:0000255" key="4">
    <source>
        <dbReference type="PROSITE-ProRule" id="PRU00658"/>
    </source>
</evidence>
<evidence type="ECO:0000303" key="5">
    <source>
    </source>
</evidence>
<sequence length="348" mass="39991">MAVALGPSGWWQRWRRRLSAREVSRMLLLLLLLGSGQGPRQVGAGQTFEYLKREHSLSKPYQGVGTSSSSLWNLMGNAMVMTQYIRLTPDMQSKQGALWNRVPCFLRDWELQVHFRIHGQGKKNLHGDGLAIWYTKDRMQPGPVFGNMDKFVGLGVFVDTYPNEEKQQERVFPYISAMVNNGSLSYDHERDGRPTELGGCTAIVRNLHYDTFLVIRYVKRHLTIMMDIDGKHEWRDCIEVPGVRLPRGYYFGTSSITGDLSDNHDVISLKLFELTVERTPEEEKLHRDVFLPSVDNMKLPEMTAPLPPLSGLALFLIVFFSLVFSVFAIVIGIILYNKWQDQSRKRFY</sequence>
<dbReference type="EMBL" id="BT021149">
    <property type="protein sequence ID" value="AAX31331.1"/>
    <property type="molecule type" value="mRNA"/>
</dbReference>
<dbReference type="EMBL" id="BC105565">
    <property type="protein sequence ID" value="AAI05566.1"/>
    <property type="molecule type" value="mRNA"/>
</dbReference>
<dbReference type="RefSeq" id="NP_001014953.1">
    <molecule id="Q2HJD1-2"/>
    <property type="nucleotide sequence ID" value="NM_001014953.1"/>
</dbReference>
<dbReference type="RefSeq" id="XP_005212405.2">
    <molecule id="Q2HJD1-1"/>
    <property type="nucleotide sequence ID" value="XM_005212348.5"/>
</dbReference>
<dbReference type="SMR" id="Q2HJD1"/>
<dbReference type="FunCoup" id="Q2HJD1">
    <property type="interactions" value="2531"/>
</dbReference>
<dbReference type="STRING" id="9913.ENSBTAP00000005195"/>
<dbReference type="GlyCosmos" id="Q2HJD1">
    <property type="glycosylation" value="1 site, No reported glycans"/>
</dbReference>
<dbReference type="GlyGen" id="Q2HJD1">
    <property type="glycosylation" value="1 site"/>
</dbReference>
<dbReference type="PaxDb" id="9913-ENSBTAP00000005195"/>
<dbReference type="GeneID" id="539289"/>
<dbReference type="KEGG" id="bta:539289"/>
<dbReference type="CTD" id="81562"/>
<dbReference type="VEuPathDB" id="HostDB:ENSBTAG00000003975"/>
<dbReference type="eggNOG" id="KOG3839">
    <property type="taxonomic scope" value="Eukaryota"/>
</dbReference>
<dbReference type="HOGENOM" id="CLU_041093_0_0_1"/>
<dbReference type="InParanoid" id="Q2HJD1"/>
<dbReference type="OMA" id="GCSIDYR"/>
<dbReference type="OrthoDB" id="270293at2759"/>
<dbReference type="TreeFam" id="TF313311"/>
<dbReference type="Reactome" id="R-BTA-204005">
    <property type="pathway name" value="COPII-mediated vesicle transport"/>
</dbReference>
<dbReference type="Reactome" id="R-BTA-5694530">
    <property type="pathway name" value="Cargo concentration in the ER"/>
</dbReference>
<dbReference type="Proteomes" id="UP000009136">
    <property type="component" value="Chromosome 11"/>
</dbReference>
<dbReference type="Bgee" id="ENSBTAG00000003975">
    <property type="expression patterns" value="Expressed in semen and 109 other cell types or tissues"/>
</dbReference>
<dbReference type="GO" id="GO:0030134">
    <property type="term" value="C:COPII-coated ER to Golgi transport vesicle"/>
    <property type="evidence" value="ECO:0000318"/>
    <property type="project" value="GO_Central"/>
</dbReference>
<dbReference type="GO" id="GO:0005789">
    <property type="term" value="C:endoplasmic reticulum membrane"/>
    <property type="evidence" value="ECO:0000318"/>
    <property type="project" value="GO_Central"/>
</dbReference>
<dbReference type="GO" id="GO:0005793">
    <property type="term" value="C:endoplasmic reticulum-Golgi intermediate compartment"/>
    <property type="evidence" value="ECO:0000318"/>
    <property type="project" value="GO_Central"/>
</dbReference>
<dbReference type="GO" id="GO:0000139">
    <property type="term" value="C:Golgi membrane"/>
    <property type="evidence" value="ECO:0000318"/>
    <property type="project" value="GO_Central"/>
</dbReference>
<dbReference type="GO" id="GO:0005537">
    <property type="term" value="F:D-mannose binding"/>
    <property type="evidence" value="ECO:0000318"/>
    <property type="project" value="GO_Central"/>
</dbReference>
<dbReference type="GO" id="GO:0046872">
    <property type="term" value="F:metal ion binding"/>
    <property type="evidence" value="ECO:0007669"/>
    <property type="project" value="UniProtKB-KW"/>
</dbReference>
<dbReference type="GO" id="GO:0006888">
    <property type="term" value="P:endoplasmic reticulum to Golgi vesicle-mediated transport"/>
    <property type="evidence" value="ECO:0000318"/>
    <property type="project" value="GO_Central"/>
</dbReference>
<dbReference type="FunFam" id="2.60.120.200:FF:000017">
    <property type="entry name" value="Vesicular integral-membrane protein VIP36"/>
    <property type="match status" value="1"/>
</dbReference>
<dbReference type="Gene3D" id="2.60.120.200">
    <property type="match status" value="1"/>
</dbReference>
<dbReference type="InterPro" id="IPR013320">
    <property type="entry name" value="ConA-like_dom_sf"/>
</dbReference>
<dbReference type="InterPro" id="IPR051136">
    <property type="entry name" value="Intracellular_Lectin-GPT"/>
</dbReference>
<dbReference type="InterPro" id="IPR005052">
    <property type="entry name" value="Lectin_leg"/>
</dbReference>
<dbReference type="PANTHER" id="PTHR12223">
    <property type="entry name" value="VESICULAR MANNOSE-BINDING LECTIN"/>
    <property type="match status" value="1"/>
</dbReference>
<dbReference type="PANTHER" id="PTHR12223:SF20">
    <property type="entry name" value="VIP36-LIKE PROTEIN"/>
    <property type="match status" value="1"/>
</dbReference>
<dbReference type="Pfam" id="PF03388">
    <property type="entry name" value="Lectin_leg-like"/>
    <property type="match status" value="1"/>
</dbReference>
<dbReference type="SUPFAM" id="SSF49899">
    <property type="entry name" value="Concanavalin A-like lectins/glucanases"/>
    <property type="match status" value="1"/>
</dbReference>
<dbReference type="PROSITE" id="PS51328">
    <property type="entry name" value="L_LECTIN_LIKE"/>
    <property type="match status" value="1"/>
</dbReference>